<name>NRDI_AGRFC</name>
<accession>Q8UJ69</accession>
<proteinExistence type="inferred from homology"/>
<sequence length="132" mass="14671">MGLIVYYSSRSENTHRFLLKLERRLFRLPLGAEEDVPQVSEPYVLVTPTYGGGGTKGAVPKPVIRFLNEPSNRNLIRGVIAAGNTNFGAAFASAGDIVSRKCAVPFLYRFELLGTEEDVANVKHGLERFWTR</sequence>
<feature type="chain" id="PRO_0000164303" description="Protein NrdI">
    <location>
        <begin position="1"/>
        <end position="132"/>
    </location>
</feature>
<keyword id="KW-1185">Reference proteome</keyword>
<reference key="1">
    <citation type="journal article" date="2001" name="Science">
        <title>The genome of the natural genetic engineer Agrobacterium tumefaciens C58.</title>
        <authorList>
            <person name="Wood D.W."/>
            <person name="Setubal J.C."/>
            <person name="Kaul R."/>
            <person name="Monks D.E."/>
            <person name="Kitajima J.P."/>
            <person name="Okura V.K."/>
            <person name="Zhou Y."/>
            <person name="Chen L."/>
            <person name="Wood G.E."/>
            <person name="Almeida N.F. Jr."/>
            <person name="Woo L."/>
            <person name="Chen Y."/>
            <person name="Paulsen I.T."/>
            <person name="Eisen J.A."/>
            <person name="Karp P.D."/>
            <person name="Bovee D. Sr."/>
            <person name="Chapman P."/>
            <person name="Clendenning J."/>
            <person name="Deatherage G."/>
            <person name="Gillet W."/>
            <person name="Grant C."/>
            <person name="Kutyavin T."/>
            <person name="Levy R."/>
            <person name="Li M.-J."/>
            <person name="McClelland E."/>
            <person name="Palmieri A."/>
            <person name="Raymond C."/>
            <person name="Rouse G."/>
            <person name="Saenphimmachak C."/>
            <person name="Wu Z."/>
            <person name="Romero P."/>
            <person name="Gordon D."/>
            <person name="Zhang S."/>
            <person name="Yoo H."/>
            <person name="Tao Y."/>
            <person name="Biddle P."/>
            <person name="Jung M."/>
            <person name="Krespan W."/>
            <person name="Perry M."/>
            <person name="Gordon-Kamm B."/>
            <person name="Liao L."/>
            <person name="Kim S."/>
            <person name="Hendrick C."/>
            <person name="Zhao Z.-Y."/>
            <person name="Dolan M."/>
            <person name="Chumley F."/>
            <person name="Tingey S.V."/>
            <person name="Tomb J.-F."/>
            <person name="Gordon M.P."/>
            <person name="Olson M.V."/>
            <person name="Nester E.W."/>
        </authorList>
    </citation>
    <scope>NUCLEOTIDE SEQUENCE [LARGE SCALE GENOMIC DNA]</scope>
    <source>
        <strain>C58 / ATCC 33970</strain>
    </source>
</reference>
<reference key="2">
    <citation type="journal article" date="2001" name="Science">
        <title>Genome sequence of the plant pathogen and biotechnology agent Agrobacterium tumefaciens C58.</title>
        <authorList>
            <person name="Goodner B."/>
            <person name="Hinkle G."/>
            <person name="Gattung S."/>
            <person name="Miller N."/>
            <person name="Blanchard M."/>
            <person name="Qurollo B."/>
            <person name="Goldman B.S."/>
            <person name="Cao Y."/>
            <person name="Askenazi M."/>
            <person name="Halling C."/>
            <person name="Mullin L."/>
            <person name="Houmiel K."/>
            <person name="Gordon J."/>
            <person name="Vaudin M."/>
            <person name="Iartchouk O."/>
            <person name="Epp A."/>
            <person name="Liu F."/>
            <person name="Wollam C."/>
            <person name="Allinger M."/>
            <person name="Doughty D."/>
            <person name="Scott C."/>
            <person name="Lappas C."/>
            <person name="Markelz B."/>
            <person name="Flanagan C."/>
            <person name="Crowell C."/>
            <person name="Gurson J."/>
            <person name="Lomo C."/>
            <person name="Sear C."/>
            <person name="Strub G."/>
            <person name="Cielo C."/>
            <person name="Slater S."/>
        </authorList>
    </citation>
    <scope>NUCLEOTIDE SEQUENCE [LARGE SCALE GENOMIC DNA]</scope>
    <source>
        <strain>C58 / ATCC 33970</strain>
    </source>
</reference>
<gene>
    <name evidence="1" type="primary">nrdI</name>
    <name type="ordered locus">Atu0069</name>
    <name type="ORF">AGR_C_104</name>
</gene>
<protein>
    <recommendedName>
        <fullName evidence="1">Protein NrdI</fullName>
    </recommendedName>
</protein>
<dbReference type="EMBL" id="AE007869">
    <property type="protein sequence ID" value="AAK85888.1"/>
    <property type="molecule type" value="Genomic_DNA"/>
</dbReference>
<dbReference type="PIR" id="AH2584">
    <property type="entry name" value="AH2584"/>
</dbReference>
<dbReference type="PIR" id="G97366">
    <property type="entry name" value="G97366"/>
</dbReference>
<dbReference type="RefSeq" id="NP_353103.1">
    <property type="nucleotide sequence ID" value="NC_003062.2"/>
</dbReference>
<dbReference type="RefSeq" id="WP_006309893.1">
    <property type="nucleotide sequence ID" value="NC_003062.2"/>
</dbReference>
<dbReference type="SMR" id="Q8UJ69"/>
<dbReference type="STRING" id="176299.Atu0069"/>
<dbReference type="EnsemblBacteria" id="AAK85888">
    <property type="protein sequence ID" value="AAK85888"/>
    <property type="gene ID" value="Atu0069"/>
</dbReference>
<dbReference type="GeneID" id="1132107"/>
<dbReference type="KEGG" id="atu:Atu0069"/>
<dbReference type="PATRIC" id="fig|176299.10.peg.62"/>
<dbReference type="eggNOG" id="COG1780">
    <property type="taxonomic scope" value="Bacteria"/>
</dbReference>
<dbReference type="HOGENOM" id="CLU_114845_0_0_5"/>
<dbReference type="OrthoDB" id="350535at2"/>
<dbReference type="PhylomeDB" id="Q8UJ69"/>
<dbReference type="BioCyc" id="AGRO:ATU0069-MONOMER"/>
<dbReference type="Proteomes" id="UP000000813">
    <property type="component" value="Chromosome circular"/>
</dbReference>
<dbReference type="GO" id="GO:0010181">
    <property type="term" value="F:FMN binding"/>
    <property type="evidence" value="ECO:0007669"/>
    <property type="project" value="InterPro"/>
</dbReference>
<dbReference type="GO" id="GO:0036211">
    <property type="term" value="P:protein modification process"/>
    <property type="evidence" value="ECO:0007669"/>
    <property type="project" value="InterPro"/>
</dbReference>
<dbReference type="Gene3D" id="3.40.50.360">
    <property type="match status" value="1"/>
</dbReference>
<dbReference type="HAMAP" id="MF_00128">
    <property type="entry name" value="NrdI"/>
    <property type="match status" value="1"/>
</dbReference>
<dbReference type="InterPro" id="IPR029039">
    <property type="entry name" value="Flavoprotein-like_sf"/>
</dbReference>
<dbReference type="InterPro" id="IPR020852">
    <property type="entry name" value="RNR_Ib_NrdI_bac"/>
</dbReference>
<dbReference type="InterPro" id="IPR004465">
    <property type="entry name" value="RNR_NrdI"/>
</dbReference>
<dbReference type="NCBIfam" id="TIGR00333">
    <property type="entry name" value="nrdI"/>
    <property type="match status" value="1"/>
</dbReference>
<dbReference type="PANTHER" id="PTHR37297">
    <property type="entry name" value="PROTEIN NRDI"/>
    <property type="match status" value="1"/>
</dbReference>
<dbReference type="PANTHER" id="PTHR37297:SF1">
    <property type="entry name" value="PROTEIN NRDI"/>
    <property type="match status" value="1"/>
</dbReference>
<dbReference type="Pfam" id="PF07972">
    <property type="entry name" value="Flavodoxin_NdrI"/>
    <property type="match status" value="1"/>
</dbReference>
<dbReference type="PIRSF" id="PIRSF005087">
    <property type="entry name" value="NrdI"/>
    <property type="match status" value="1"/>
</dbReference>
<dbReference type="SUPFAM" id="SSF52218">
    <property type="entry name" value="Flavoproteins"/>
    <property type="match status" value="1"/>
</dbReference>
<evidence type="ECO:0000255" key="1">
    <source>
        <dbReference type="HAMAP-Rule" id="MF_00128"/>
    </source>
</evidence>
<comment type="function">
    <text evidence="1">Probably involved in ribonucleotide reductase function.</text>
</comment>
<comment type="similarity">
    <text evidence="1">Belongs to the NrdI family.</text>
</comment>
<organism>
    <name type="scientific">Agrobacterium fabrum (strain C58 / ATCC 33970)</name>
    <name type="common">Agrobacterium tumefaciens (strain C58)</name>
    <dbReference type="NCBI Taxonomy" id="176299"/>
    <lineage>
        <taxon>Bacteria</taxon>
        <taxon>Pseudomonadati</taxon>
        <taxon>Pseudomonadota</taxon>
        <taxon>Alphaproteobacteria</taxon>
        <taxon>Hyphomicrobiales</taxon>
        <taxon>Rhizobiaceae</taxon>
        <taxon>Rhizobium/Agrobacterium group</taxon>
        <taxon>Agrobacterium</taxon>
        <taxon>Agrobacterium tumefaciens complex</taxon>
    </lineage>
</organism>